<comment type="function">
    <text evidence="1">DNA ligase that catalyzes the formation of phosphodiester linkages between 5'-phosphoryl and 3'-hydroxyl groups in double-stranded DNA using NAD as a coenzyme and as the energy source for the reaction. It is essential for DNA replication and repair of damaged DNA.</text>
</comment>
<comment type="catalytic activity">
    <reaction evidence="1">
        <text>NAD(+) + (deoxyribonucleotide)n-3'-hydroxyl + 5'-phospho-(deoxyribonucleotide)m = (deoxyribonucleotide)n+m + AMP + beta-nicotinamide D-nucleotide.</text>
        <dbReference type="EC" id="6.5.1.2"/>
    </reaction>
</comment>
<comment type="cofactor">
    <cofactor evidence="1">
        <name>Mg(2+)</name>
        <dbReference type="ChEBI" id="CHEBI:18420"/>
    </cofactor>
    <cofactor evidence="1">
        <name>Mn(2+)</name>
        <dbReference type="ChEBI" id="CHEBI:29035"/>
    </cofactor>
</comment>
<comment type="similarity">
    <text evidence="1">Belongs to the NAD-dependent DNA ligase family. LigA subfamily.</text>
</comment>
<keyword id="KW-0227">DNA damage</keyword>
<keyword id="KW-0234">DNA repair</keyword>
<keyword id="KW-0235">DNA replication</keyword>
<keyword id="KW-0436">Ligase</keyword>
<keyword id="KW-0460">Magnesium</keyword>
<keyword id="KW-0464">Manganese</keyword>
<keyword id="KW-0479">Metal-binding</keyword>
<keyword id="KW-0520">NAD</keyword>
<keyword id="KW-1185">Reference proteome</keyword>
<keyword id="KW-0862">Zinc</keyword>
<accession>B8I3I1</accession>
<gene>
    <name evidence="1" type="primary">ligA</name>
    <name type="ordered locus">Ccel_1976</name>
</gene>
<name>DNLJ_RUMCH</name>
<reference key="1">
    <citation type="submission" date="2009-01" db="EMBL/GenBank/DDBJ databases">
        <title>Complete sequence of Clostridium cellulolyticum H10.</title>
        <authorList>
            <consortium name="US DOE Joint Genome Institute"/>
            <person name="Lucas S."/>
            <person name="Copeland A."/>
            <person name="Lapidus A."/>
            <person name="Glavina del Rio T."/>
            <person name="Dalin E."/>
            <person name="Tice H."/>
            <person name="Bruce D."/>
            <person name="Goodwin L."/>
            <person name="Pitluck S."/>
            <person name="Chertkov O."/>
            <person name="Saunders E."/>
            <person name="Brettin T."/>
            <person name="Detter J.C."/>
            <person name="Han C."/>
            <person name="Larimer F."/>
            <person name="Land M."/>
            <person name="Hauser L."/>
            <person name="Kyrpides N."/>
            <person name="Ivanova N."/>
            <person name="Zhou J."/>
            <person name="Richardson P."/>
        </authorList>
    </citation>
    <scope>NUCLEOTIDE SEQUENCE [LARGE SCALE GENOMIC DNA]</scope>
    <source>
        <strain>ATCC 35319 / DSM 5812 / JCM 6584 / H10</strain>
    </source>
</reference>
<proteinExistence type="inferred from homology"/>
<organism>
    <name type="scientific">Ruminiclostridium cellulolyticum (strain ATCC 35319 / DSM 5812 / JCM 6584 / H10)</name>
    <name type="common">Clostridium cellulolyticum</name>
    <dbReference type="NCBI Taxonomy" id="394503"/>
    <lineage>
        <taxon>Bacteria</taxon>
        <taxon>Bacillati</taxon>
        <taxon>Bacillota</taxon>
        <taxon>Clostridia</taxon>
        <taxon>Eubacteriales</taxon>
        <taxon>Oscillospiraceae</taxon>
        <taxon>Ruminiclostridium</taxon>
    </lineage>
</organism>
<dbReference type="EC" id="6.5.1.2" evidence="1"/>
<dbReference type="EMBL" id="CP001348">
    <property type="protein sequence ID" value="ACL76324.1"/>
    <property type="molecule type" value="Genomic_DNA"/>
</dbReference>
<dbReference type="RefSeq" id="WP_015925428.1">
    <property type="nucleotide sequence ID" value="NC_011898.1"/>
</dbReference>
<dbReference type="SMR" id="B8I3I1"/>
<dbReference type="STRING" id="394503.Ccel_1976"/>
<dbReference type="KEGG" id="cce:Ccel_1976"/>
<dbReference type="eggNOG" id="COG0272">
    <property type="taxonomic scope" value="Bacteria"/>
</dbReference>
<dbReference type="HOGENOM" id="CLU_007764_2_0_9"/>
<dbReference type="OrthoDB" id="9759736at2"/>
<dbReference type="Proteomes" id="UP000001349">
    <property type="component" value="Chromosome"/>
</dbReference>
<dbReference type="GO" id="GO:0003677">
    <property type="term" value="F:DNA binding"/>
    <property type="evidence" value="ECO:0007669"/>
    <property type="project" value="InterPro"/>
</dbReference>
<dbReference type="GO" id="GO:0003911">
    <property type="term" value="F:DNA ligase (NAD+) activity"/>
    <property type="evidence" value="ECO:0007669"/>
    <property type="project" value="UniProtKB-UniRule"/>
</dbReference>
<dbReference type="GO" id="GO:0046872">
    <property type="term" value="F:metal ion binding"/>
    <property type="evidence" value="ECO:0007669"/>
    <property type="project" value="UniProtKB-KW"/>
</dbReference>
<dbReference type="GO" id="GO:0006281">
    <property type="term" value="P:DNA repair"/>
    <property type="evidence" value="ECO:0007669"/>
    <property type="project" value="UniProtKB-KW"/>
</dbReference>
<dbReference type="GO" id="GO:0006260">
    <property type="term" value="P:DNA replication"/>
    <property type="evidence" value="ECO:0007669"/>
    <property type="project" value="UniProtKB-KW"/>
</dbReference>
<dbReference type="CDD" id="cd17748">
    <property type="entry name" value="BRCT_DNA_ligase_like"/>
    <property type="match status" value="1"/>
</dbReference>
<dbReference type="Gene3D" id="1.10.150.20">
    <property type="entry name" value="5' to 3' exonuclease, C-terminal subdomain"/>
    <property type="match status" value="2"/>
</dbReference>
<dbReference type="Gene3D" id="3.40.50.10190">
    <property type="entry name" value="BRCT domain"/>
    <property type="match status" value="1"/>
</dbReference>
<dbReference type="Gene3D" id="3.30.470.30">
    <property type="entry name" value="DNA ligase/mRNA capping enzyme"/>
    <property type="match status" value="1"/>
</dbReference>
<dbReference type="Gene3D" id="1.10.287.610">
    <property type="entry name" value="Helix hairpin bin"/>
    <property type="match status" value="1"/>
</dbReference>
<dbReference type="Gene3D" id="2.40.50.140">
    <property type="entry name" value="Nucleic acid-binding proteins"/>
    <property type="match status" value="1"/>
</dbReference>
<dbReference type="HAMAP" id="MF_01588">
    <property type="entry name" value="DNA_ligase_A"/>
    <property type="match status" value="1"/>
</dbReference>
<dbReference type="InterPro" id="IPR001357">
    <property type="entry name" value="BRCT_dom"/>
</dbReference>
<dbReference type="InterPro" id="IPR036420">
    <property type="entry name" value="BRCT_dom_sf"/>
</dbReference>
<dbReference type="InterPro" id="IPR041663">
    <property type="entry name" value="DisA/LigA_HHH"/>
</dbReference>
<dbReference type="InterPro" id="IPR001679">
    <property type="entry name" value="DNA_ligase"/>
</dbReference>
<dbReference type="InterPro" id="IPR013839">
    <property type="entry name" value="DNAligase_adenylation"/>
</dbReference>
<dbReference type="InterPro" id="IPR013840">
    <property type="entry name" value="DNAligase_N"/>
</dbReference>
<dbReference type="InterPro" id="IPR003583">
    <property type="entry name" value="Hlx-hairpin-Hlx_DNA-bd_motif"/>
</dbReference>
<dbReference type="InterPro" id="IPR012340">
    <property type="entry name" value="NA-bd_OB-fold"/>
</dbReference>
<dbReference type="InterPro" id="IPR004150">
    <property type="entry name" value="NAD_DNA_ligase_OB"/>
</dbReference>
<dbReference type="InterPro" id="IPR010994">
    <property type="entry name" value="RuvA_2-like"/>
</dbReference>
<dbReference type="NCBIfam" id="TIGR00575">
    <property type="entry name" value="dnlj"/>
    <property type="match status" value="1"/>
</dbReference>
<dbReference type="NCBIfam" id="NF005932">
    <property type="entry name" value="PRK07956.1"/>
    <property type="match status" value="1"/>
</dbReference>
<dbReference type="Pfam" id="PF00533">
    <property type="entry name" value="BRCT"/>
    <property type="match status" value="1"/>
</dbReference>
<dbReference type="Pfam" id="PF01653">
    <property type="entry name" value="DNA_ligase_aden"/>
    <property type="match status" value="1"/>
</dbReference>
<dbReference type="Pfam" id="PF03120">
    <property type="entry name" value="DNA_ligase_OB"/>
    <property type="match status" value="1"/>
</dbReference>
<dbReference type="Pfam" id="PF12826">
    <property type="entry name" value="HHH_2"/>
    <property type="match status" value="1"/>
</dbReference>
<dbReference type="PIRSF" id="PIRSF001604">
    <property type="entry name" value="LigA"/>
    <property type="match status" value="1"/>
</dbReference>
<dbReference type="SMART" id="SM00292">
    <property type="entry name" value="BRCT"/>
    <property type="match status" value="1"/>
</dbReference>
<dbReference type="SMART" id="SM00278">
    <property type="entry name" value="HhH1"/>
    <property type="match status" value="3"/>
</dbReference>
<dbReference type="SMART" id="SM00532">
    <property type="entry name" value="LIGANc"/>
    <property type="match status" value="1"/>
</dbReference>
<dbReference type="SUPFAM" id="SSF52113">
    <property type="entry name" value="BRCT domain"/>
    <property type="match status" value="1"/>
</dbReference>
<dbReference type="SUPFAM" id="SSF56091">
    <property type="entry name" value="DNA ligase/mRNA capping enzyme, catalytic domain"/>
    <property type="match status" value="1"/>
</dbReference>
<dbReference type="SUPFAM" id="SSF50249">
    <property type="entry name" value="Nucleic acid-binding proteins"/>
    <property type="match status" value="1"/>
</dbReference>
<dbReference type="SUPFAM" id="SSF47781">
    <property type="entry name" value="RuvA domain 2-like"/>
    <property type="match status" value="1"/>
</dbReference>
<dbReference type="PROSITE" id="PS50172">
    <property type="entry name" value="BRCT"/>
    <property type="match status" value="1"/>
</dbReference>
<protein>
    <recommendedName>
        <fullName evidence="1">DNA ligase</fullName>
        <ecNumber evidence="1">6.5.1.2</ecNumber>
    </recommendedName>
    <alternativeName>
        <fullName evidence="1">Polydeoxyribonucleotide synthase [NAD(+)]</fullName>
    </alternativeName>
</protein>
<evidence type="ECO:0000255" key="1">
    <source>
        <dbReference type="HAMAP-Rule" id="MF_01588"/>
    </source>
</evidence>
<feature type="chain" id="PRO_0000380345" description="DNA ligase">
    <location>
        <begin position="1"/>
        <end position="657"/>
    </location>
</feature>
<feature type="domain" description="BRCT" evidence="1">
    <location>
        <begin position="571"/>
        <end position="657"/>
    </location>
</feature>
<feature type="active site" description="N6-AMP-lysine intermediate" evidence="1">
    <location>
        <position position="104"/>
    </location>
</feature>
<feature type="binding site" evidence="1">
    <location>
        <begin position="80"/>
        <end position="81"/>
    </location>
    <ligand>
        <name>NAD(+)</name>
        <dbReference type="ChEBI" id="CHEBI:57540"/>
    </ligand>
</feature>
<feature type="binding site" evidence="1">
    <location>
        <position position="125"/>
    </location>
    <ligand>
        <name>NAD(+)</name>
        <dbReference type="ChEBI" id="CHEBI:57540"/>
    </ligand>
</feature>
<feature type="binding site" evidence="1">
    <location>
        <position position="159"/>
    </location>
    <ligand>
        <name>NAD(+)</name>
        <dbReference type="ChEBI" id="CHEBI:57540"/>
    </ligand>
</feature>
<feature type="binding site" evidence="1">
    <location>
        <position position="297"/>
    </location>
    <ligand>
        <name>NAD(+)</name>
        <dbReference type="ChEBI" id="CHEBI:57540"/>
    </ligand>
</feature>
<feature type="binding site" evidence="1">
    <location>
        <position position="386"/>
    </location>
    <ligand>
        <name>Zn(2+)</name>
        <dbReference type="ChEBI" id="CHEBI:29105"/>
    </ligand>
</feature>
<feature type="binding site" evidence="1">
    <location>
        <position position="389"/>
    </location>
    <ligand>
        <name>Zn(2+)</name>
        <dbReference type="ChEBI" id="CHEBI:29105"/>
    </ligand>
</feature>
<feature type="binding site" evidence="1">
    <location>
        <position position="406"/>
    </location>
    <ligand>
        <name>Zn(2+)</name>
        <dbReference type="ChEBI" id="CHEBI:29105"/>
    </ligand>
</feature>
<feature type="binding site" evidence="1">
    <location>
        <position position="411"/>
    </location>
    <ligand>
        <name>Zn(2+)</name>
        <dbReference type="ChEBI" id="CHEBI:29105"/>
    </ligand>
</feature>
<sequence length="657" mass="74138">MADKIQLMKDKIEILDRAAKAYYQENTEIMSNIEYDKLYDELLELEKETGVVLSNSPSIHVGYELLSNLPKERHEKPMLSLDKTKDVGTLKEWLGTQKGILSWKLDGLTIVLTYQDGHLVKAVTRGTGEEGEVITNNARVFRNLPVTIAYKGTLILRGEAIIRYSDFIKINNEIADVGVKYKNPRNLCSGSVRQLNNKVTSERNVYFFGFSLVKADNVELDNSRASQMNWLKNQGFDIVDFKEVTSSNIEETVQWFSQNIEANDFPSDGLVLTFEDIAYGESLGSTAKFPRDSIAFKWRDEIKETTLLNIEWSPSRTGLINPIAIFEPVELEGTTVSRASIHNISIMEGLELGIGDTIGVYKANMIIPQISENLTRSGMAPIPEECPVCKGKTEIKQENGVKTLYCVNNECLAKQIKSFTHFVGRDAMNMEGLSEATLEKLIAKGLIKELADLFHIEKYKNEILELEGLGEKSFNKLITSINKARKTTAVRLLYSLGIPNVGLSNAKLICRYFKYDWNKIENAEFSELIQIGGIGDIMAESFIRFFSDEKKKVIVQDVLNELELEEVQLSQSEQIFENLNFVITGSVEQFKNRDELKDVIEEKGGKVTGAVTSKTNYLINNDNMSNSSKNKKAKELNISIITEAQFLEWLNNGVRPE</sequence>